<gene>
    <name evidence="1" type="primary">rplF</name>
    <name type="ordered locus">PM1400</name>
</gene>
<comment type="function">
    <text evidence="1">This protein binds to the 23S rRNA, and is important in its secondary structure. It is located near the subunit interface in the base of the L7/L12 stalk, and near the tRNA binding site of the peptidyltransferase center.</text>
</comment>
<comment type="subunit">
    <text evidence="1">Part of the 50S ribosomal subunit.</text>
</comment>
<comment type="similarity">
    <text evidence="1">Belongs to the universal ribosomal protein uL6 family.</text>
</comment>
<dbReference type="EMBL" id="AE004439">
    <property type="protein sequence ID" value="AAK03484.1"/>
    <property type="molecule type" value="Genomic_DNA"/>
</dbReference>
<dbReference type="RefSeq" id="WP_005717917.1">
    <property type="nucleotide sequence ID" value="NC_002663.1"/>
</dbReference>
<dbReference type="SMR" id="Q9CL45"/>
<dbReference type="STRING" id="272843.PM1400"/>
<dbReference type="EnsemblBacteria" id="AAK03484">
    <property type="protein sequence ID" value="AAK03484"/>
    <property type="gene ID" value="PM1400"/>
</dbReference>
<dbReference type="GeneID" id="77207041"/>
<dbReference type="KEGG" id="pmu:PM1400"/>
<dbReference type="HOGENOM" id="CLU_065464_1_2_6"/>
<dbReference type="OrthoDB" id="9805007at2"/>
<dbReference type="Proteomes" id="UP000000809">
    <property type="component" value="Chromosome"/>
</dbReference>
<dbReference type="GO" id="GO:0022625">
    <property type="term" value="C:cytosolic large ribosomal subunit"/>
    <property type="evidence" value="ECO:0007669"/>
    <property type="project" value="TreeGrafter"/>
</dbReference>
<dbReference type="GO" id="GO:0019843">
    <property type="term" value="F:rRNA binding"/>
    <property type="evidence" value="ECO:0007669"/>
    <property type="project" value="UniProtKB-UniRule"/>
</dbReference>
<dbReference type="GO" id="GO:0003735">
    <property type="term" value="F:structural constituent of ribosome"/>
    <property type="evidence" value="ECO:0007669"/>
    <property type="project" value="InterPro"/>
</dbReference>
<dbReference type="GO" id="GO:0002181">
    <property type="term" value="P:cytoplasmic translation"/>
    <property type="evidence" value="ECO:0007669"/>
    <property type="project" value="TreeGrafter"/>
</dbReference>
<dbReference type="FunFam" id="3.90.930.12:FF:000001">
    <property type="entry name" value="50S ribosomal protein L6"/>
    <property type="match status" value="1"/>
</dbReference>
<dbReference type="FunFam" id="3.90.930.12:FF:000002">
    <property type="entry name" value="50S ribosomal protein L6"/>
    <property type="match status" value="1"/>
</dbReference>
<dbReference type="Gene3D" id="3.90.930.12">
    <property type="entry name" value="Ribosomal protein L6, alpha-beta domain"/>
    <property type="match status" value="2"/>
</dbReference>
<dbReference type="HAMAP" id="MF_01365_B">
    <property type="entry name" value="Ribosomal_uL6_B"/>
    <property type="match status" value="1"/>
</dbReference>
<dbReference type="InterPro" id="IPR000702">
    <property type="entry name" value="Ribosomal_uL6-like"/>
</dbReference>
<dbReference type="InterPro" id="IPR036789">
    <property type="entry name" value="Ribosomal_uL6-like_a/b-dom_sf"/>
</dbReference>
<dbReference type="InterPro" id="IPR020040">
    <property type="entry name" value="Ribosomal_uL6_a/b-dom"/>
</dbReference>
<dbReference type="InterPro" id="IPR019906">
    <property type="entry name" value="Ribosomal_uL6_bac-type"/>
</dbReference>
<dbReference type="InterPro" id="IPR002358">
    <property type="entry name" value="Ribosomal_uL6_CS"/>
</dbReference>
<dbReference type="NCBIfam" id="TIGR03654">
    <property type="entry name" value="L6_bact"/>
    <property type="match status" value="1"/>
</dbReference>
<dbReference type="PANTHER" id="PTHR11655">
    <property type="entry name" value="60S/50S RIBOSOMAL PROTEIN L6/L9"/>
    <property type="match status" value="1"/>
</dbReference>
<dbReference type="PANTHER" id="PTHR11655:SF14">
    <property type="entry name" value="LARGE RIBOSOMAL SUBUNIT PROTEIN UL6M"/>
    <property type="match status" value="1"/>
</dbReference>
<dbReference type="Pfam" id="PF00347">
    <property type="entry name" value="Ribosomal_L6"/>
    <property type="match status" value="2"/>
</dbReference>
<dbReference type="PIRSF" id="PIRSF002162">
    <property type="entry name" value="Ribosomal_L6"/>
    <property type="match status" value="1"/>
</dbReference>
<dbReference type="PRINTS" id="PR00059">
    <property type="entry name" value="RIBOSOMALL6"/>
</dbReference>
<dbReference type="SUPFAM" id="SSF56053">
    <property type="entry name" value="Ribosomal protein L6"/>
    <property type="match status" value="2"/>
</dbReference>
<dbReference type="PROSITE" id="PS00525">
    <property type="entry name" value="RIBOSOMAL_L6_1"/>
    <property type="match status" value="1"/>
</dbReference>
<evidence type="ECO:0000255" key="1">
    <source>
        <dbReference type="HAMAP-Rule" id="MF_01365"/>
    </source>
</evidence>
<evidence type="ECO:0000305" key="2"/>
<reference key="1">
    <citation type="journal article" date="2001" name="Proc. Natl. Acad. Sci. U.S.A.">
        <title>Complete genomic sequence of Pasteurella multocida Pm70.</title>
        <authorList>
            <person name="May B.J."/>
            <person name="Zhang Q."/>
            <person name="Li L.L."/>
            <person name="Paustian M.L."/>
            <person name="Whittam T.S."/>
            <person name="Kapur V."/>
        </authorList>
    </citation>
    <scope>NUCLEOTIDE SEQUENCE [LARGE SCALE GENOMIC DNA]</scope>
    <source>
        <strain>Pm70</strain>
    </source>
</reference>
<organism>
    <name type="scientific">Pasteurella multocida (strain Pm70)</name>
    <dbReference type="NCBI Taxonomy" id="272843"/>
    <lineage>
        <taxon>Bacteria</taxon>
        <taxon>Pseudomonadati</taxon>
        <taxon>Pseudomonadota</taxon>
        <taxon>Gammaproteobacteria</taxon>
        <taxon>Pasteurellales</taxon>
        <taxon>Pasteurellaceae</taxon>
        <taxon>Pasteurella</taxon>
    </lineage>
</organism>
<keyword id="KW-1185">Reference proteome</keyword>
<keyword id="KW-0687">Ribonucleoprotein</keyword>
<keyword id="KW-0689">Ribosomal protein</keyword>
<keyword id="KW-0694">RNA-binding</keyword>
<keyword id="KW-0699">rRNA-binding</keyword>
<feature type="chain" id="PRO_0000265269" description="Large ribosomal subunit protein uL6">
    <location>
        <begin position="1"/>
        <end position="177"/>
    </location>
</feature>
<sequence length="177" mass="18823">MSRVAKAPVSIPAGVEVKLDGQLLTVKGKNGELSRTIHNAVEVKQDNNELTFSPREGIVGADAQAGTARALVNAMVIGVTEGFTKKLQLVGVGYRAQIKGNAVALSLGFSHPVEHALPAGITAECPSQTEIVLKGADKQLIGQVAADIRAYRRPEPYKGKGVRYADEVVRIKEAKKK</sequence>
<name>RL6_PASMU</name>
<accession>Q9CL45</accession>
<protein>
    <recommendedName>
        <fullName evidence="1">Large ribosomal subunit protein uL6</fullName>
    </recommendedName>
    <alternativeName>
        <fullName evidence="2">50S ribosomal protein L6</fullName>
    </alternativeName>
</protein>
<proteinExistence type="inferred from homology"/>